<organism>
    <name type="scientific">Deinococcus radiodurans (strain ATCC 13939 / DSM 20539 / JCM 16871 / CCUG 27074 / LMG 4051 / NBRC 15346 / NCIMB 9279 / VKM B-1422 / R1)</name>
    <dbReference type="NCBI Taxonomy" id="243230"/>
    <lineage>
        <taxon>Bacteria</taxon>
        <taxon>Thermotogati</taxon>
        <taxon>Deinococcota</taxon>
        <taxon>Deinococci</taxon>
        <taxon>Deinococcales</taxon>
        <taxon>Deinococcaceae</taxon>
        <taxon>Deinococcus</taxon>
    </lineage>
</organism>
<dbReference type="EMBL" id="AE000513">
    <property type="protein sequence ID" value="AAF11633.1"/>
    <property type="molecule type" value="Genomic_DNA"/>
</dbReference>
<dbReference type="PIR" id="H75317">
    <property type="entry name" value="H75317"/>
</dbReference>
<dbReference type="RefSeq" id="NP_295810.1">
    <property type="nucleotide sequence ID" value="NC_001263.1"/>
</dbReference>
<dbReference type="RefSeq" id="WP_010888718.1">
    <property type="nucleotide sequence ID" value="NC_001263.1"/>
</dbReference>
<dbReference type="SMR" id="Q9RSN7"/>
<dbReference type="FunCoup" id="Q9RSN7">
    <property type="interactions" value="405"/>
</dbReference>
<dbReference type="STRING" id="243230.DR_2087"/>
<dbReference type="PaxDb" id="243230-DR_2087"/>
<dbReference type="EnsemblBacteria" id="AAF11633">
    <property type="protein sequence ID" value="AAF11633"/>
    <property type="gene ID" value="DR_2087"/>
</dbReference>
<dbReference type="GeneID" id="69518328"/>
<dbReference type="KEGG" id="dra:DR_2087"/>
<dbReference type="PATRIC" id="fig|243230.17.peg.2310"/>
<dbReference type="eggNOG" id="COG0290">
    <property type="taxonomic scope" value="Bacteria"/>
</dbReference>
<dbReference type="HOGENOM" id="CLU_054919_3_1_0"/>
<dbReference type="InParanoid" id="Q9RSN7"/>
<dbReference type="OrthoDB" id="9806014at2"/>
<dbReference type="Proteomes" id="UP000002524">
    <property type="component" value="Chromosome 1"/>
</dbReference>
<dbReference type="GO" id="GO:0005829">
    <property type="term" value="C:cytosol"/>
    <property type="evidence" value="ECO:0000318"/>
    <property type="project" value="GO_Central"/>
</dbReference>
<dbReference type="GO" id="GO:0043022">
    <property type="term" value="F:ribosome binding"/>
    <property type="evidence" value="ECO:0000318"/>
    <property type="project" value="GO_Central"/>
</dbReference>
<dbReference type="GO" id="GO:0003743">
    <property type="term" value="F:translation initiation factor activity"/>
    <property type="evidence" value="ECO:0000318"/>
    <property type="project" value="GO_Central"/>
</dbReference>
<dbReference type="GO" id="GO:0032790">
    <property type="term" value="P:ribosome disassembly"/>
    <property type="evidence" value="ECO:0000318"/>
    <property type="project" value="GO_Central"/>
</dbReference>
<dbReference type="FunFam" id="3.10.20.80:FF:000001">
    <property type="entry name" value="Translation initiation factor IF-3"/>
    <property type="match status" value="1"/>
</dbReference>
<dbReference type="FunFam" id="3.30.110.10:FF:000001">
    <property type="entry name" value="Translation initiation factor IF-3"/>
    <property type="match status" value="1"/>
</dbReference>
<dbReference type="Gene3D" id="3.30.110.10">
    <property type="entry name" value="Translation initiation factor 3 (IF-3), C-terminal domain"/>
    <property type="match status" value="1"/>
</dbReference>
<dbReference type="Gene3D" id="3.10.20.80">
    <property type="entry name" value="Translation initiation factor 3 (IF-3), N-terminal domain"/>
    <property type="match status" value="1"/>
</dbReference>
<dbReference type="HAMAP" id="MF_00080">
    <property type="entry name" value="IF_3"/>
    <property type="match status" value="1"/>
</dbReference>
<dbReference type="InterPro" id="IPR036788">
    <property type="entry name" value="T_IF-3_C_sf"/>
</dbReference>
<dbReference type="InterPro" id="IPR036787">
    <property type="entry name" value="T_IF-3_N_sf"/>
</dbReference>
<dbReference type="InterPro" id="IPR019813">
    <property type="entry name" value="Translation_initiation_fac3_CS"/>
</dbReference>
<dbReference type="InterPro" id="IPR001288">
    <property type="entry name" value="Translation_initiation_fac_3"/>
</dbReference>
<dbReference type="InterPro" id="IPR019815">
    <property type="entry name" value="Translation_initiation_fac_3_C"/>
</dbReference>
<dbReference type="InterPro" id="IPR019814">
    <property type="entry name" value="Translation_initiation_fac_3_N"/>
</dbReference>
<dbReference type="NCBIfam" id="TIGR00168">
    <property type="entry name" value="infC"/>
    <property type="match status" value="1"/>
</dbReference>
<dbReference type="PANTHER" id="PTHR10938">
    <property type="entry name" value="TRANSLATION INITIATION FACTOR IF-3"/>
    <property type="match status" value="1"/>
</dbReference>
<dbReference type="PANTHER" id="PTHR10938:SF0">
    <property type="entry name" value="TRANSLATION INITIATION FACTOR IF-3, MITOCHONDRIAL"/>
    <property type="match status" value="1"/>
</dbReference>
<dbReference type="Pfam" id="PF00707">
    <property type="entry name" value="IF3_C"/>
    <property type="match status" value="1"/>
</dbReference>
<dbReference type="Pfam" id="PF05198">
    <property type="entry name" value="IF3_N"/>
    <property type="match status" value="1"/>
</dbReference>
<dbReference type="SUPFAM" id="SSF55200">
    <property type="entry name" value="Translation initiation factor IF3, C-terminal domain"/>
    <property type="match status" value="1"/>
</dbReference>
<dbReference type="SUPFAM" id="SSF54364">
    <property type="entry name" value="Translation initiation factor IF3, N-terminal domain"/>
    <property type="match status" value="1"/>
</dbReference>
<dbReference type="PROSITE" id="PS00938">
    <property type="entry name" value="IF3"/>
    <property type="match status" value="1"/>
</dbReference>
<protein>
    <recommendedName>
        <fullName evidence="1">Translation initiation factor IF-3</fullName>
    </recommendedName>
</protein>
<proteinExistence type="inferred from homology"/>
<accession>Q9RSN7</accession>
<keyword id="KW-0963">Cytoplasm</keyword>
<keyword id="KW-0396">Initiation factor</keyword>
<keyword id="KW-0648">Protein biosynthesis</keyword>
<keyword id="KW-1185">Reference proteome</keyword>
<name>IF3_DEIRA</name>
<feature type="chain" id="PRO_0000177514" description="Translation initiation factor IF-3">
    <location>
        <begin position="1"/>
        <end position="212"/>
    </location>
</feature>
<feature type="region of interest" description="Disordered" evidence="2">
    <location>
        <begin position="168"/>
        <end position="212"/>
    </location>
</feature>
<feature type="compositionally biased region" description="Basic and acidic residues" evidence="2">
    <location>
        <begin position="176"/>
        <end position="186"/>
    </location>
</feature>
<feature type="compositionally biased region" description="Low complexity" evidence="2">
    <location>
        <begin position="194"/>
        <end position="212"/>
    </location>
</feature>
<evidence type="ECO:0000255" key="1">
    <source>
        <dbReference type="HAMAP-Rule" id="MF_00080"/>
    </source>
</evidence>
<evidence type="ECO:0000256" key="2">
    <source>
        <dbReference type="SAM" id="MobiDB-lite"/>
    </source>
</evidence>
<comment type="function">
    <text evidence="1">IF-3 binds to the 30S ribosomal subunit and shifts the equilibrium between 70S ribosomes and their 50S and 30S subunits in favor of the free subunits, thus enhancing the availability of 30S subunits on which protein synthesis initiation begins.</text>
</comment>
<comment type="subunit">
    <text evidence="1">Monomer.</text>
</comment>
<comment type="subcellular location">
    <subcellularLocation>
        <location evidence="1">Cytoplasm</location>
    </subcellularLocation>
</comment>
<comment type="similarity">
    <text evidence="1">Belongs to the IF-3 family.</text>
</comment>
<sequence length="212" mass="23617">MITIAKDLKVNEQIRVRQVRLIGAEGEQIGIIDTREAMNMAREKSLDLVMVSPQAVPPVCRLLDYGRFRYEQQQNEKENRKRARSQEVKAIKFRVKIDDNDFKTKTGHVRRFLNEGHKVKVTIMFRGRERTHPELGERILVRVAETLADVGAPEGNPSMMGMDMNMIMAPKAPASPKKDKADRPEGDAGDTDMAAPAPAPAAAPETESAPSA</sequence>
<gene>
    <name evidence="1" type="primary">infC</name>
    <name type="ordered locus">DR_2087</name>
</gene>
<reference key="1">
    <citation type="journal article" date="1999" name="Science">
        <title>Genome sequence of the radioresistant bacterium Deinococcus radiodurans R1.</title>
        <authorList>
            <person name="White O."/>
            <person name="Eisen J.A."/>
            <person name="Heidelberg J.F."/>
            <person name="Hickey E.K."/>
            <person name="Peterson J.D."/>
            <person name="Dodson R.J."/>
            <person name="Haft D.H."/>
            <person name="Gwinn M.L."/>
            <person name="Nelson W.C."/>
            <person name="Richardson D.L."/>
            <person name="Moffat K.S."/>
            <person name="Qin H."/>
            <person name="Jiang L."/>
            <person name="Pamphile W."/>
            <person name="Crosby M."/>
            <person name="Shen M."/>
            <person name="Vamathevan J.J."/>
            <person name="Lam P."/>
            <person name="McDonald L.A."/>
            <person name="Utterback T.R."/>
            <person name="Zalewski C."/>
            <person name="Makarova K.S."/>
            <person name="Aravind L."/>
            <person name="Daly M.J."/>
            <person name="Minton K.W."/>
            <person name="Fleischmann R.D."/>
            <person name="Ketchum K.A."/>
            <person name="Nelson K.E."/>
            <person name="Salzberg S.L."/>
            <person name="Smith H.O."/>
            <person name="Venter J.C."/>
            <person name="Fraser C.M."/>
        </authorList>
    </citation>
    <scope>NUCLEOTIDE SEQUENCE [LARGE SCALE GENOMIC DNA]</scope>
    <source>
        <strain>ATCC 13939 / DSM 20539 / JCM 16871 / CCUG 27074 / LMG 4051 / NBRC 15346 / NCIMB 9279 / VKM B-1422 / R1</strain>
    </source>
</reference>